<reference key="1">
    <citation type="journal article" date="2010" name="Genome Biol.">
        <title>Structure and dynamics of the pan-genome of Streptococcus pneumoniae and closely related species.</title>
        <authorList>
            <person name="Donati C."/>
            <person name="Hiller N.L."/>
            <person name="Tettelin H."/>
            <person name="Muzzi A."/>
            <person name="Croucher N.J."/>
            <person name="Angiuoli S.V."/>
            <person name="Oggioni M."/>
            <person name="Dunning Hotopp J.C."/>
            <person name="Hu F.Z."/>
            <person name="Riley D.R."/>
            <person name="Covacci A."/>
            <person name="Mitchell T.J."/>
            <person name="Bentley S.D."/>
            <person name="Kilian M."/>
            <person name="Ehrlich G.D."/>
            <person name="Rappuoli R."/>
            <person name="Moxon E.R."/>
            <person name="Masignani V."/>
        </authorList>
    </citation>
    <scope>NUCLEOTIDE SEQUENCE [LARGE SCALE GENOMIC DNA]</scope>
    <source>
        <strain>JJA</strain>
    </source>
</reference>
<gene>
    <name evidence="2" type="primary">rpmA</name>
    <name type="ordered locus">SPJ_1045</name>
</gene>
<name>RL27_STRZJ</name>
<feature type="propeptide" id="PRO_0000459957" evidence="1">
    <location>
        <begin position="1"/>
        <end position="12"/>
    </location>
</feature>
<feature type="chain" id="PRO_1000195890" description="Large ribosomal subunit protein bL27">
    <location>
        <begin position="13"/>
        <end position="97"/>
    </location>
</feature>
<feature type="region of interest" description="Disordered" evidence="3">
    <location>
        <begin position="13"/>
        <end position="37"/>
    </location>
</feature>
<dbReference type="EMBL" id="CP000919">
    <property type="protein sequence ID" value="ACO19254.1"/>
    <property type="molecule type" value="Genomic_DNA"/>
</dbReference>
<dbReference type="RefSeq" id="WP_000916509.1">
    <property type="nucleotide sequence ID" value="NC_012466.1"/>
</dbReference>
<dbReference type="SMR" id="C1CE94"/>
<dbReference type="GeneID" id="93739803"/>
<dbReference type="KEGG" id="sjj:SPJ_1045"/>
<dbReference type="HOGENOM" id="CLU_095424_4_0_9"/>
<dbReference type="Proteomes" id="UP000002206">
    <property type="component" value="Chromosome"/>
</dbReference>
<dbReference type="GO" id="GO:0022625">
    <property type="term" value="C:cytosolic large ribosomal subunit"/>
    <property type="evidence" value="ECO:0007669"/>
    <property type="project" value="TreeGrafter"/>
</dbReference>
<dbReference type="GO" id="GO:0003735">
    <property type="term" value="F:structural constituent of ribosome"/>
    <property type="evidence" value="ECO:0007669"/>
    <property type="project" value="InterPro"/>
</dbReference>
<dbReference type="GO" id="GO:0006412">
    <property type="term" value="P:translation"/>
    <property type="evidence" value="ECO:0007669"/>
    <property type="project" value="UniProtKB-UniRule"/>
</dbReference>
<dbReference type="FunFam" id="2.40.50.100:FF:000004">
    <property type="entry name" value="50S ribosomal protein L27"/>
    <property type="match status" value="1"/>
</dbReference>
<dbReference type="Gene3D" id="2.40.50.100">
    <property type="match status" value="1"/>
</dbReference>
<dbReference type="HAMAP" id="MF_00539">
    <property type="entry name" value="Ribosomal_bL27"/>
    <property type="match status" value="1"/>
</dbReference>
<dbReference type="InterPro" id="IPR001684">
    <property type="entry name" value="Ribosomal_bL27"/>
</dbReference>
<dbReference type="InterPro" id="IPR018261">
    <property type="entry name" value="Ribosomal_bL27_CS"/>
</dbReference>
<dbReference type="NCBIfam" id="TIGR00062">
    <property type="entry name" value="L27"/>
    <property type="match status" value="1"/>
</dbReference>
<dbReference type="PANTHER" id="PTHR15893:SF0">
    <property type="entry name" value="LARGE RIBOSOMAL SUBUNIT PROTEIN BL27M"/>
    <property type="match status" value="1"/>
</dbReference>
<dbReference type="PANTHER" id="PTHR15893">
    <property type="entry name" value="RIBOSOMAL PROTEIN L27"/>
    <property type="match status" value="1"/>
</dbReference>
<dbReference type="Pfam" id="PF01016">
    <property type="entry name" value="Ribosomal_L27"/>
    <property type="match status" value="1"/>
</dbReference>
<dbReference type="PRINTS" id="PR00063">
    <property type="entry name" value="RIBOSOMALL27"/>
</dbReference>
<dbReference type="SUPFAM" id="SSF110324">
    <property type="entry name" value="Ribosomal L27 protein-like"/>
    <property type="match status" value="1"/>
</dbReference>
<dbReference type="PROSITE" id="PS00831">
    <property type="entry name" value="RIBOSOMAL_L27"/>
    <property type="match status" value="1"/>
</dbReference>
<accession>C1CE94</accession>
<organism>
    <name type="scientific">Streptococcus pneumoniae (strain JJA)</name>
    <dbReference type="NCBI Taxonomy" id="488222"/>
    <lineage>
        <taxon>Bacteria</taxon>
        <taxon>Bacillati</taxon>
        <taxon>Bacillota</taxon>
        <taxon>Bacilli</taxon>
        <taxon>Lactobacillales</taxon>
        <taxon>Streptococcaceae</taxon>
        <taxon>Streptococcus</taxon>
    </lineage>
</organism>
<proteinExistence type="inferred from homology"/>
<keyword id="KW-0687">Ribonucleoprotein</keyword>
<keyword id="KW-0689">Ribosomal protein</keyword>
<sequence>MLKMTLNNLQLFAHKKGGGSTSNGRDSQAKRLGAKAADGQTVTGGSILYRQRGTHIYPGVNVGRGGDDTLFAKVEGVVRFERKGRDKKQVSVYPIAK</sequence>
<evidence type="ECO:0000250" key="1">
    <source>
        <dbReference type="UniProtKB" id="Q2FXT0"/>
    </source>
</evidence>
<evidence type="ECO:0000255" key="2">
    <source>
        <dbReference type="HAMAP-Rule" id="MF_00539"/>
    </source>
</evidence>
<evidence type="ECO:0000256" key="3">
    <source>
        <dbReference type="SAM" id="MobiDB-lite"/>
    </source>
</evidence>
<evidence type="ECO:0000305" key="4"/>
<comment type="PTM">
    <text evidence="1">The N-terminus is cleaved by ribosomal processing cysteine protease Prp.</text>
</comment>
<comment type="similarity">
    <text evidence="2">Belongs to the bacterial ribosomal protein bL27 family.</text>
</comment>
<protein>
    <recommendedName>
        <fullName evidence="2">Large ribosomal subunit protein bL27</fullName>
    </recommendedName>
    <alternativeName>
        <fullName evidence="4">50S ribosomal protein L27</fullName>
    </alternativeName>
</protein>